<reference evidence="7" key="1">
    <citation type="journal article" date="2013" name="Biochimie">
        <title>Identification of multiple antimicrobial peptides from the skin of fine-spined frog, Hylarana spinulosa (Ranidae).</title>
        <authorList>
            <person name="Yang X."/>
            <person name="Hu Y."/>
            <person name="Xu S."/>
            <person name="Hu Y."/>
            <person name="Meng H."/>
            <person name="Guo C."/>
            <person name="Liu Y."/>
            <person name="Liu J."/>
            <person name="Yu Z."/>
            <person name="Wang H."/>
        </authorList>
    </citation>
    <scope>NUCLEOTIDE SEQUENCE [MRNA]</scope>
    <scope>PROTEIN SEQUENCE OF 40-76</scope>
    <scope>FUNCTION</scope>
    <scope>SYNTHESIS OF 40-76</scope>
    <scope>IDENTIFICATION BY MASS SPECTROMETRY</scope>
    <scope>SUBCELLULAR LOCATION</scope>
    <source>
        <tissue evidence="4">Skin</tissue>
    </source>
</reference>
<protein>
    <recommendedName>
        <fullName evidence="4">Esculentin-2SN1</fullName>
    </recommendedName>
</protein>
<feature type="signal peptide" evidence="2">
    <location>
        <begin position="1"/>
        <end position="22"/>
    </location>
</feature>
<feature type="propeptide" id="PRO_0000439782" evidence="6">
    <location>
        <begin position="23"/>
        <end position="37"/>
    </location>
</feature>
<feature type="peptide" id="PRO_0000439783" description="Esculentin-2SN1" evidence="3">
    <location>
        <begin position="40"/>
        <end position="76"/>
    </location>
</feature>
<feature type="disulfide bond" evidence="1">
    <location>
        <begin position="70"/>
        <end position="76"/>
    </location>
</feature>
<proteinExistence type="evidence at protein level"/>
<keyword id="KW-0878">Amphibian defense peptide</keyword>
<keyword id="KW-0044">Antibiotic</keyword>
<keyword id="KW-0929">Antimicrobial</keyword>
<keyword id="KW-0165">Cleavage on pair of basic residues</keyword>
<keyword id="KW-0204">Cytolysis</keyword>
<keyword id="KW-0903">Direct protein sequencing</keyword>
<keyword id="KW-1015">Disulfide bond</keyword>
<keyword id="KW-0354">Hemolysis</keyword>
<keyword id="KW-0964">Secreted</keyword>
<keyword id="KW-0732">Signal</keyword>
<comment type="function">
    <text evidence="3">Antimicrobial peptide. Active against some Gram-negative and a variety of Gram-positive bacterial strains. Not active against fungi. Shows very weak hemolytic activity against human erythrocytes.</text>
</comment>
<comment type="subcellular location">
    <subcellularLocation>
        <location evidence="3">Secreted</location>
    </subcellularLocation>
</comment>
<comment type="tissue specificity">
    <text evidence="6">Expressed by the skin glands.</text>
</comment>
<comment type="similarity">
    <text evidence="5">Belongs to the frog skin active peptide (FSAP) family. Esculentin subfamily.</text>
</comment>
<comment type="online information" name="The antimicrobial peptide database">
    <link uri="https://wangapd3.com/database/query_output.php?ID=02276"/>
</comment>
<organism evidence="4">
    <name type="scientific">Sylvirana spinulosa</name>
    <name type="common">Fine-spined frog</name>
    <name type="synonym">Hylarana spinulosa</name>
    <dbReference type="NCBI Taxonomy" id="369515"/>
    <lineage>
        <taxon>Eukaryota</taxon>
        <taxon>Metazoa</taxon>
        <taxon>Chordata</taxon>
        <taxon>Craniata</taxon>
        <taxon>Vertebrata</taxon>
        <taxon>Euteleostomi</taxon>
        <taxon>Amphibia</taxon>
        <taxon>Batrachia</taxon>
        <taxon>Anura</taxon>
        <taxon>Neobatrachia</taxon>
        <taxon>Ranoidea</taxon>
        <taxon>Ranidae</taxon>
        <taxon>Sylvirana</taxon>
    </lineage>
</organism>
<accession>E7EKI0</accession>
<evidence type="ECO:0000250" key="1">
    <source>
        <dbReference type="UniProtKB" id="A7WNV5"/>
    </source>
</evidence>
<evidence type="ECO:0000255" key="2"/>
<evidence type="ECO:0000269" key="3">
    <source>
    </source>
</evidence>
<evidence type="ECO:0000303" key="4">
    <source>
    </source>
</evidence>
<evidence type="ECO:0000305" key="5"/>
<evidence type="ECO:0000305" key="6">
    <source>
    </source>
</evidence>
<evidence type="ECO:0000312" key="7">
    <source>
        <dbReference type="EMBL" id="ADV36180.1"/>
    </source>
</evidence>
<sequence>MFTMKKSLLFLFFLGTISLSLCEQERGADEDDGGEEVKRGIFSLFKAGAKFFGKNLLKEAGKAGAEHLACKAANQC</sequence>
<name>E2SN1_SYLSP</name>
<dbReference type="EMBL" id="HQ735157">
    <property type="protein sequence ID" value="ADV36180.1"/>
    <property type="molecule type" value="mRNA"/>
</dbReference>
<dbReference type="GO" id="GO:0005576">
    <property type="term" value="C:extracellular region"/>
    <property type="evidence" value="ECO:0007669"/>
    <property type="project" value="UniProtKB-SubCell"/>
</dbReference>
<dbReference type="GO" id="GO:0050829">
    <property type="term" value="P:defense response to Gram-negative bacterium"/>
    <property type="evidence" value="ECO:0000314"/>
    <property type="project" value="UniProtKB"/>
</dbReference>
<dbReference type="GO" id="GO:0050830">
    <property type="term" value="P:defense response to Gram-positive bacterium"/>
    <property type="evidence" value="ECO:0000314"/>
    <property type="project" value="UniProtKB"/>
</dbReference>
<dbReference type="GO" id="GO:0044179">
    <property type="term" value="P:hemolysis in another organism"/>
    <property type="evidence" value="ECO:0000314"/>
    <property type="project" value="UniProtKB"/>
</dbReference>
<dbReference type="InterPro" id="IPR004275">
    <property type="entry name" value="Frog_antimicrobial_propeptide"/>
</dbReference>
<dbReference type="Pfam" id="PF03032">
    <property type="entry name" value="FSAP_sig_propep"/>
    <property type="match status" value="1"/>
</dbReference>